<dbReference type="EMBL" id="CP001400">
    <property type="protein sequence ID" value="ACP38139.1"/>
    <property type="molecule type" value="Genomic_DNA"/>
</dbReference>
<dbReference type="RefSeq" id="WP_012711384.1">
    <property type="nucleotide sequence ID" value="NC_012588.1"/>
</dbReference>
<dbReference type="SMR" id="C3MVE4"/>
<dbReference type="KEGG" id="sia:M1425_1385"/>
<dbReference type="HOGENOM" id="CLU_208825_0_0_2"/>
<dbReference type="Proteomes" id="UP000001350">
    <property type="component" value="Chromosome"/>
</dbReference>
<dbReference type="GO" id="GO:1990904">
    <property type="term" value="C:ribonucleoprotein complex"/>
    <property type="evidence" value="ECO:0007669"/>
    <property type="project" value="UniProtKB-KW"/>
</dbReference>
<dbReference type="GO" id="GO:0005840">
    <property type="term" value="C:ribosome"/>
    <property type="evidence" value="ECO:0007669"/>
    <property type="project" value="UniProtKB-KW"/>
</dbReference>
<dbReference type="GO" id="GO:0019843">
    <property type="term" value="F:rRNA binding"/>
    <property type="evidence" value="ECO:0007669"/>
    <property type="project" value="UniProtKB-KW"/>
</dbReference>
<dbReference type="GO" id="GO:0003735">
    <property type="term" value="F:structural constituent of ribosome"/>
    <property type="evidence" value="ECO:0007669"/>
    <property type="project" value="InterPro"/>
</dbReference>
<dbReference type="GO" id="GO:0008270">
    <property type="term" value="F:zinc ion binding"/>
    <property type="evidence" value="ECO:0007669"/>
    <property type="project" value="UniProtKB-UniRule"/>
</dbReference>
<dbReference type="GO" id="GO:0006412">
    <property type="term" value="P:translation"/>
    <property type="evidence" value="ECO:0007669"/>
    <property type="project" value="UniProtKB-UniRule"/>
</dbReference>
<dbReference type="FunFam" id="2.20.25.30:FF:000003">
    <property type="entry name" value="50S ribosomal protein L37e"/>
    <property type="match status" value="1"/>
</dbReference>
<dbReference type="Gene3D" id="2.20.25.30">
    <property type="match status" value="1"/>
</dbReference>
<dbReference type="HAMAP" id="MF_00547">
    <property type="entry name" value="Ribosomal_eL37"/>
    <property type="match status" value="1"/>
</dbReference>
<dbReference type="InterPro" id="IPR001569">
    <property type="entry name" value="Ribosomal_eL37"/>
</dbReference>
<dbReference type="InterPro" id="IPR011331">
    <property type="entry name" value="Ribosomal_eL37/eL43"/>
</dbReference>
<dbReference type="InterPro" id="IPR018267">
    <property type="entry name" value="Ribosomal_eL37_CS"/>
</dbReference>
<dbReference type="InterPro" id="IPR011332">
    <property type="entry name" value="Ribosomal_zn-bd"/>
</dbReference>
<dbReference type="NCBIfam" id="NF003214">
    <property type="entry name" value="PRK04179.1"/>
    <property type="match status" value="1"/>
</dbReference>
<dbReference type="Pfam" id="PF01907">
    <property type="entry name" value="Ribosomal_L37e"/>
    <property type="match status" value="1"/>
</dbReference>
<dbReference type="SUPFAM" id="SSF57829">
    <property type="entry name" value="Zn-binding ribosomal proteins"/>
    <property type="match status" value="1"/>
</dbReference>
<dbReference type="PROSITE" id="PS01077">
    <property type="entry name" value="RIBOSOMAL_L37E"/>
    <property type="match status" value="1"/>
</dbReference>
<gene>
    <name evidence="1" type="primary">rpl37e</name>
    <name type="ordered locus">M1425_1385</name>
</gene>
<feature type="chain" id="PRO_1000211972" description="Large ribosomal subunit protein eL37">
    <location>
        <begin position="1"/>
        <end position="61"/>
    </location>
</feature>
<feature type="zinc finger region" description="C4-type" evidence="1">
    <location>
        <begin position="19"/>
        <end position="37"/>
    </location>
</feature>
<feature type="binding site" evidence="1">
    <location>
        <position position="19"/>
    </location>
    <ligand>
        <name>Zn(2+)</name>
        <dbReference type="ChEBI" id="CHEBI:29105"/>
    </ligand>
</feature>
<feature type="binding site" evidence="1">
    <location>
        <position position="22"/>
    </location>
    <ligand>
        <name>Zn(2+)</name>
        <dbReference type="ChEBI" id="CHEBI:29105"/>
    </ligand>
</feature>
<feature type="binding site" evidence="1">
    <location>
        <position position="34"/>
    </location>
    <ligand>
        <name>Zn(2+)</name>
        <dbReference type="ChEBI" id="CHEBI:29105"/>
    </ligand>
</feature>
<feature type="binding site" evidence="1">
    <location>
        <position position="37"/>
    </location>
    <ligand>
        <name>Zn(2+)</name>
        <dbReference type="ChEBI" id="CHEBI:29105"/>
    </ligand>
</feature>
<evidence type="ECO:0000255" key="1">
    <source>
        <dbReference type="HAMAP-Rule" id="MF_00547"/>
    </source>
</evidence>
<evidence type="ECO:0000305" key="2"/>
<organism>
    <name type="scientific">Saccharolobus islandicus (strain M.14.25 / Kamchatka #1)</name>
    <name type="common">Sulfolobus islandicus</name>
    <dbReference type="NCBI Taxonomy" id="427317"/>
    <lineage>
        <taxon>Archaea</taxon>
        <taxon>Thermoproteota</taxon>
        <taxon>Thermoprotei</taxon>
        <taxon>Sulfolobales</taxon>
        <taxon>Sulfolobaceae</taxon>
        <taxon>Saccharolobus</taxon>
    </lineage>
</organism>
<name>RL37_SACI4</name>
<sequence length="61" mass="7117">MKGTPSFGKMNKSHTHIRCRRCGRNAYNVSKHYCAACGFGKTKKIRRYSWQNKKVNGVRIR</sequence>
<reference key="1">
    <citation type="journal article" date="2009" name="Proc. Natl. Acad. Sci. U.S.A.">
        <title>Biogeography of the Sulfolobus islandicus pan-genome.</title>
        <authorList>
            <person name="Reno M.L."/>
            <person name="Held N.L."/>
            <person name="Fields C.J."/>
            <person name="Burke P.V."/>
            <person name="Whitaker R.J."/>
        </authorList>
    </citation>
    <scope>NUCLEOTIDE SEQUENCE [LARGE SCALE GENOMIC DNA]</scope>
    <source>
        <strain>M.14.25 / Kamchatka #1</strain>
    </source>
</reference>
<accession>C3MVE4</accession>
<keyword id="KW-0479">Metal-binding</keyword>
<keyword id="KW-0687">Ribonucleoprotein</keyword>
<keyword id="KW-0689">Ribosomal protein</keyword>
<keyword id="KW-0694">RNA-binding</keyword>
<keyword id="KW-0699">rRNA-binding</keyword>
<keyword id="KW-0862">Zinc</keyword>
<keyword id="KW-0863">Zinc-finger</keyword>
<protein>
    <recommendedName>
        <fullName evidence="1">Large ribosomal subunit protein eL37</fullName>
    </recommendedName>
    <alternativeName>
        <fullName evidence="2">50S ribosomal protein L37e</fullName>
    </alternativeName>
</protein>
<comment type="function">
    <text evidence="1">Binds to the 23S rRNA.</text>
</comment>
<comment type="cofactor">
    <cofactor evidence="1">
        <name>Zn(2+)</name>
        <dbReference type="ChEBI" id="CHEBI:29105"/>
    </cofactor>
    <text evidence="1">Binds 1 zinc ion per subunit.</text>
</comment>
<comment type="similarity">
    <text evidence="1">Belongs to the eukaryotic ribosomal protein eL37 family.</text>
</comment>
<proteinExistence type="inferred from homology"/>